<name>GLGA_STRGC</name>
<reference key="1">
    <citation type="journal article" date="2007" name="J. Bacteriol.">
        <title>Genome-wide transcriptional changes in Streptococcus gordonii in response to competence signaling peptide.</title>
        <authorList>
            <person name="Vickerman M.M."/>
            <person name="Iobst S."/>
            <person name="Jesionowski A.M."/>
            <person name="Gill S.R."/>
        </authorList>
    </citation>
    <scope>NUCLEOTIDE SEQUENCE [LARGE SCALE GENOMIC DNA]</scope>
    <source>
        <strain>Challis / ATCC 35105 / BCRC 15272 / CH1 / DL1 / V288</strain>
    </source>
</reference>
<accession>A8AYH0</accession>
<dbReference type="EC" id="2.4.1.21" evidence="1"/>
<dbReference type="EMBL" id="CP000725">
    <property type="protein sequence ID" value="ABV10483.1"/>
    <property type="molecule type" value="Genomic_DNA"/>
</dbReference>
<dbReference type="RefSeq" id="WP_012130619.1">
    <property type="nucleotide sequence ID" value="NC_009785.1"/>
</dbReference>
<dbReference type="SMR" id="A8AYH0"/>
<dbReference type="STRING" id="467705.SGO_1551"/>
<dbReference type="CAZy" id="GT5">
    <property type="family name" value="Glycosyltransferase Family 5"/>
</dbReference>
<dbReference type="KEGG" id="sgo:SGO_1551"/>
<dbReference type="eggNOG" id="COG0297">
    <property type="taxonomic scope" value="Bacteria"/>
</dbReference>
<dbReference type="HOGENOM" id="CLU_009583_18_2_9"/>
<dbReference type="UniPathway" id="UPA00164"/>
<dbReference type="Proteomes" id="UP000001131">
    <property type="component" value="Chromosome"/>
</dbReference>
<dbReference type="GO" id="GO:0009011">
    <property type="term" value="F:alpha-1,4-glucan glucosyltransferase (ADP-glucose donor) activity"/>
    <property type="evidence" value="ECO:0007669"/>
    <property type="project" value="UniProtKB-UniRule"/>
</dbReference>
<dbReference type="GO" id="GO:0004373">
    <property type="term" value="F:alpha-1,4-glucan glucosyltransferase (UDP-glucose donor) activity"/>
    <property type="evidence" value="ECO:0007669"/>
    <property type="project" value="InterPro"/>
</dbReference>
<dbReference type="GO" id="GO:0005978">
    <property type="term" value="P:glycogen biosynthetic process"/>
    <property type="evidence" value="ECO:0007669"/>
    <property type="project" value="UniProtKB-UniRule"/>
</dbReference>
<dbReference type="CDD" id="cd03791">
    <property type="entry name" value="GT5_Glycogen_synthase_DULL1-like"/>
    <property type="match status" value="1"/>
</dbReference>
<dbReference type="Gene3D" id="3.40.50.2000">
    <property type="entry name" value="Glycogen Phosphorylase B"/>
    <property type="match status" value="2"/>
</dbReference>
<dbReference type="HAMAP" id="MF_00484">
    <property type="entry name" value="Glycogen_synth"/>
    <property type="match status" value="1"/>
</dbReference>
<dbReference type="InterPro" id="IPR001296">
    <property type="entry name" value="Glyco_trans_1"/>
</dbReference>
<dbReference type="InterPro" id="IPR011835">
    <property type="entry name" value="GS/SS"/>
</dbReference>
<dbReference type="InterPro" id="IPR013534">
    <property type="entry name" value="Starch_synth_cat_dom"/>
</dbReference>
<dbReference type="NCBIfam" id="TIGR02095">
    <property type="entry name" value="glgA"/>
    <property type="match status" value="1"/>
</dbReference>
<dbReference type="NCBIfam" id="NF001898">
    <property type="entry name" value="PRK00654.1-1"/>
    <property type="match status" value="1"/>
</dbReference>
<dbReference type="PANTHER" id="PTHR45825:SF11">
    <property type="entry name" value="ALPHA AMYLASE DOMAIN-CONTAINING PROTEIN"/>
    <property type="match status" value="1"/>
</dbReference>
<dbReference type="PANTHER" id="PTHR45825">
    <property type="entry name" value="GRANULE-BOUND STARCH SYNTHASE 1, CHLOROPLASTIC/AMYLOPLASTIC"/>
    <property type="match status" value="1"/>
</dbReference>
<dbReference type="Pfam" id="PF08323">
    <property type="entry name" value="Glyco_transf_5"/>
    <property type="match status" value="1"/>
</dbReference>
<dbReference type="Pfam" id="PF00534">
    <property type="entry name" value="Glycos_transf_1"/>
    <property type="match status" value="1"/>
</dbReference>
<dbReference type="SUPFAM" id="SSF53756">
    <property type="entry name" value="UDP-Glycosyltransferase/glycogen phosphorylase"/>
    <property type="match status" value="1"/>
</dbReference>
<organism>
    <name type="scientific">Streptococcus gordonii (strain Challis / ATCC 35105 / BCRC 15272 / CH1 / DL1 / V288)</name>
    <dbReference type="NCBI Taxonomy" id="467705"/>
    <lineage>
        <taxon>Bacteria</taxon>
        <taxon>Bacillati</taxon>
        <taxon>Bacillota</taxon>
        <taxon>Bacilli</taxon>
        <taxon>Lactobacillales</taxon>
        <taxon>Streptococcaceae</taxon>
        <taxon>Streptococcus</taxon>
    </lineage>
</organism>
<feature type="chain" id="PRO_1000081332" description="Glycogen synthase">
    <location>
        <begin position="1"/>
        <end position="476"/>
    </location>
</feature>
<feature type="binding site" evidence="1">
    <location>
        <position position="15"/>
    </location>
    <ligand>
        <name>ADP-alpha-D-glucose</name>
        <dbReference type="ChEBI" id="CHEBI:57498"/>
    </ligand>
</feature>
<keyword id="KW-0320">Glycogen biosynthesis</keyword>
<keyword id="KW-0328">Glycosyltransferase</keyword>
<keyword id="KW-1185">Reference proteome</keyword>
<keyword id="KW-0808">Transferase</keyword>
<comment type="function">
    <text evidence="1">Synthesizes alpha-1,4-glucan chains using ADP-glucose.</text>
</comment>
<comment type="catalytic activity">
    <reaction evidence="1">
        <text>[(1-&gt;4)-alpha-D-glucosyl](n) + ADP-alpha-D-glucose = [(1-&gt;4)-alpha-D-glucosyl](n+1) + ADP + H(+)</text>
        <dbReference type="Rhea" id="RHEA:18189"/>
        <dbReference type="Rhea" id="RHEA-COMP:9584"/>
        <dbReference type="Rhea" id="RHEA-COMP:9587"/>
        <dbReference type="ChEBI" id="CHEBI:15378"/>
        <dbReference type="ChEBI" id="CHEBI:15444"/>
        <dbReference type="ChEBI" id="CHEBI:57498"/>
        <dbReference type="ChEBI" id="CHEBI:456216"/>
        <dbReference type="EC" id="2.4.1.21"/>
    </reaction>
</comment>
<comment type="pathway">
    <text evidence="1">Glycan biosynthesis; glycogen biosynthesis.</text>
</comment>
<comment type="similarity">
    <text evidence="1">Belongs to the glycosyltransferase 1 family. Bacterial/plant glycogen synthase subfamily.</text>
</comment>
<evidence type="ECO:0000255" key="1">
    <source>
        <dbReference type="HAMAP-Rule" id="MF_00484"/>
    </source>
</evidence>
<protein>
    <recommendedName>
        <fullName evidence="1">Glycogen synthase</fullName>
        <ecNumber evidence="1">2.4.1.21</ecNumber>
    </recommendedName>
    <alternativeName>
        <fullName evidence="1">Starch [bacterial glycogen] synthase</fullName>
    </alternativeName>
</protein>
<proteinExistence type="inferred from homology"/>
<gene>
    <name evidence="1" type="primary">glgA</name>
    <name type="ordered locus">SGO_1551</name>
</gene>
<sequence>MKILFVAAEGAPFSKTGGLGDVIGALPKSLVKHGHQVGVILPYYDMTDAKFGDQVEDLFYFEVSVGWRRQYVGVKRLVLNGVSFYFIDNQHYFFRGHVYGDFDDGERFAYFQLAAVELMERIDFIPDVLHVHDYHTAMIPFLVKEKYHWIQAYRNIKTVLTIHNLEFQGQFPDSMLWELFGVGYERYADGTLRWNDCLNWMKAGILYADRVTTVSPSYAGEIRTPEFGCNLDQILRMESGKLVGIVNGIDTEIYNPETDPLLAHHFDKSDLSGKLENKRALQERVGLPVRDDVPLVGIVSRLTRQKGFDLVVEELHNFLQQDVQIILLGTGDPAFEQAFAWFGQAYPDKLSANILFDVGLAQEIYAASDIFLMPSRFEPCGLSQMMAMRYGTLPLVHEVGGLRDTVEPYNVYTGQGTGFSFNNFSGYWLSWTFKEALNLYTHDKEAWKSMQEQAMERDFSWDTASLAYSDLYQSLL</sequence>